<sequence>MFKTINKSITSILLFMISFYQKWFSPFFGPRCRFIPSCSSYGYEAITRHGPWKGGWLTLRRLSRCHPLTPCGCDPVPD</sequence>
<organism>
    <name type="scientific">Prochlorococcus marinus (strain MIT 9312)</name>
    <dbReference type="NCBI Taxonomy" id="74546"/>
    <lineage>
        <taxon>Bacteria</taxon>
        <taxon>Bacillati</taxon>
        <taxon>Cyanobacteriota</taxon>
        <taxon>Cyanophyceae</taxon>
        <taxon>Synechococcales</taxon>
        <taxon>Prochlorococcaceae</taxon>
        <taxon>Prochlorococcus</taxon>
    </lineage>
</organism>
<comment type="function">
    <text evidence="1">Could be involved in insertion of integral membrane proteins into the membrane.</text>
</comment>
<comment type="subcellular location">
    <subcellularLocation>
        <location evidence="1">Cell inner membrane</location>
        <topology evidence="1">Peripheral membrane protein</topology>
        <orientation evidence="1">Cytoplasmic side</orientation>
    </subcellularLocation>
</comment>
<comment type="similarity">
    <text evidence="1">Belongs to the UPF0161 family.</text>
</comment>
<comment type="sequence caution" evidence="2">
    <conflict type="erroneous initiation">
        <sequence resource="EMBL-CDS" id="ABB49467"/>
    </conflict>
</comment>
<feature type="chain" id="PRO_0000253140" description="Putative membrane protein insertion efficiency factor">
    <location>
        <begin position="1"/>
        <end position="78"/>
    </location>
</feature>
<protein>
    <recommendedName>
        <fullName evidence="1">Putative membrane protein insertion efficiency factor</fullName>
    </recommendedName>
</protein>
<reference key="1">
    <citation type="journal article" date="2006" name="Science">
        <title>Genomic islands and the ecology and evolution of Prochlorococcus.</title>
        <authorList>
            <person name="Coleman M.L."/>
            <person name="Sullivan M.B."/>
            <person name="Martiny A.C."/>
            <person name="Steglich C."/>
            <person name="Barry K."/>
            <person name="Delong E.F."/>
            <person name="Chisholm S.W."/>
        </authorList>
    </citation>
    <scope>NUCLEOTIDE SEQUENCE [LARGE SCALE GENOMIC DNA]</scope>
    <source>
        <strain>MIT 9312</strain>
    </source>
</reference>
<dbReference type="EMBL" id="CP000111">
    <property type="protein sequence ID" value="ABB49467.1"/>
    <property type="status" value="ALT_INIT"/>
    <property type="molecule type" value="Genomic_DNA"/>
</dbReference>
<dbReference type="STRING" id="74546.PMT9312_0406"/>
<dbReference type="KEGG" id="pmi:PMT9312_0406"/>
<dbReference type="eggNOG" id="COG0759">
    <property type="taxonomic scope" value="Bacteria"/>
</dbReference>
<dbReference type="HOGENOM" id="CLU_144811_6_1_3"/>
<dbReference type="OrthoDB" id="9801753at2"/>
<dbReference type="Proteomes" id="UP000002715">
    <property type="component" value="Chromosome"/>
</dbReference>
<dbReference type="GO" id="GO:0005886">
    <property type="term" value="C:plasma membrane"/>
    <property type="evidence" value="ECO:0007669"/>
    <property type="project" value="UniProtKB-SubCell"/>
</dbReference>
<dbReference type="HAMAP" id="MF_00386">
    <property type="entry name" value="UPF0161_YidD"/>
    <property type="match status" value="1"/>
</dbReference>
<dbReference type="InterPro" id="IPR002696">
    <property type="entry name" value="Membr_insert_effic_factor_YidD"/>
</dbReference>
<dbReference type="NCBIfam" id="TIGR00278">
    <property type="entry name" value="membrane protein insertion efficiency factor YidD"/>
    <property type="match status" value="1"/>
</dbReference>
<dbReference type="PANTHER" id="PTHR33383">
    <property type="entry name" value="MEMBRANE PROTEIN INSERTION EFFICIENCY FACTOR-RELATED"/>
    <property type="match status" value="1"/>
</dbReference>
<dbReference type="PANTHER" id="PTHR33383:SF1">
    <property type="entry name" value="MEMBRANE PROTEIN INSERTION EFFICIENCY FACTOR-RELATED"/>
    <property type="match status" value="1"/>
</dbReference>
<dbReference type="Pfam" id="PF01809">
    <property type="entry name" value="YidD"/>
    <property type="match status" value="1"/>
</dbReference>
<dbReference type="SMART" id="SM01234">
    <property type="entry name" value="Haemolytic"/>
    <property type="match status" value="1"/>
</dbReference>
<proteinExistence type="inferred from homology"/>
<evidence type="ECO:0000255" key="1">
    <source>
        <dbReference type="HAMAP-Rule" id="MF_00386"/>
    </source>
</evidence>
<evidence type="ECO:0000305" key="2"/>
<accession>Q31CC8</accession>
<name>YIDD_PROM9</name>
<gene>
    <name type="ordered locus">PMT9312_0406</name>
</gene>
<keyword id="KW-0997">Cell inner membrane</keyword>
<keyword id="KW-1003">Cell membrane</keyword>
<keyword id="KW-0472">Membrane</keyword>